<comment type="function">
    <text evidence="1">NDH-1 shuttles electrons from NADH, via FMN and iron-sulfur (Fe-S) centers, to quinones in the respiratory chain. The immediate electron acceptor for the enzyme in this species is believed to be ubiquinone. Couples the redox reaction to proton translocation (for every two electrons transferred, four hydrogen ions are translocated across the cytoplasmic membrane), and thus conserves the redox energy in a proton gradient.</text>
</comment>
<comment type="catalytic activity">
    <reaction evidence="1">
        <text>a quinone + NADH + 5 H(+)(in) = a quinol + NAD(+) + 4 H(+)(out)</text>
        <dbReference type="Rhea" id="RHEA:57888"/>
        <dbReference type="ChEBI" id="CHEBI:15378"/>
        <dbReference type="ChEBI" id="CHEBI:24646"/>
        <dbReference type="ChEBI" id="CHEBI:57540"/>
        <dbReference type="ChEBI" id="CHEBI:57945"/>
        <dbReference type="ChEBI" id="CHEBI:132124"/>
    </reaction>
</comment>
<comment type="subunit">
    <text evidence="1">NDH-1 is composed of 14 different subunits. Subunits NuoB, C, D, E, F, and G constitute the peripheral sector of the complex.</text>
</comment>
<comment type="subcellular location">
    <subcellularLocation>
        <location evidence="1">Cell inner membrane</location>
        <topology evidence="1">Peripheral membrane protein</topology>
        <orientation evidence="1">Cytoplasmic side</orientation>
    </subcellularLocation>
</comment>
<comment type="similarity">
    <text evidence="1">Belongs to the complex I 30 kDa subunit family.</text>
</comment>
<comment type="sequence caution" evidence="2">
    <conflict type="erroneous initiation">
        <sequence resource="EMBL-CDS" id="ACA11294"/>
    </conflict>
</comment>
<name>NUOC_XYLFM</name>
<accession>B0U1W7</accession>
<proteinExistence type="inferred from homology"/>
<reference key="1">
    <citation type="journal article" date="2010" name="J. Bacteriol.">
        <title>Whole genome sequences of two Xylella fastidiosa strains (M12 and M23) causing almond leaf scorch disease in California.</title>
        <authorList>
            <person name="Chen J."/>
            <person name="Xie G."/>
            <person name="Han S."/>
            <person name="Chertkov O."/>
            <person name="Sims D."/>
            <person name="Civerolo E.L."/>
        </authorList>
    </citation>
    <scope>NUCLEOTIDE SEQUENCE [LARGE SCALE GENOMIC DNA]</scope>
    <source>
        <strain>M12</strain>
    </source>
</reference>
<evidence type="ECO:0000255" key="1">
    <source>
        <dbReference type="HAMAP-Rule" id="MF_01357"/>
    </source>
</evidence>
<evidence type="ECO:0000305" key="2"/>
<organism>
    <name type="scientific">Xylella fastidiosa (strain M12)</name>
    <dbReference type="NCBI Taxonomy" id="405440"/>
    <lineage>
        <taxon>Bacteria</taxon>
        <taxon>Pseudomonadati</taxon>
        <taxon>Pseudomonadota</taxon>
        <taxon>Gammaproteobacteria</taxon>
        <taxon>Lysobacterales</taxon>
        <taxon>Lysobacteraceae</taxon>
        <taxon>Xylella</taxon>
    </lineage>
</organism>
<keyword id="KW-0997">Cell inner membrane</keyword>
<keyword id="KW-1003">Cell membrane</keyword>
<keyword id="KW-0472">Membrane</keyword>
<keyword id="KW-0520">NAD</keyword>
<keyword id="KW-0874">Quinone</keyword>
<keyword id="KW-1278">Translocase</keyword>
<keyword id="KW-0813">Transport</keyword>
<keyword id="KW-0830">Ubiquinone</keyword>
<sequence>MAEQTLSFVDCLTSRFPTVRVSVAQPRGEITLDVPVVEWCAVCKGLRDEFDFEQLSDLCGVDYLGYGNAEWDTTGVSAQGFSRGVAGKAVGRFAWGEFPSAGTNDGTQPWDVPQERFAVLAHLISYRHNRRLRVRCFASNDALPIVASLTDVWPGVNWFEREAFDLFGIVFEGHLDLRRILTDYGFIGHPFRKDFPLTGNVEVRYDEEKKRVVYVPVTSVEPRVSVPRVIRDDARFGAAAGESTHSETV</sequence>
<feature type="chain" id="PRO_0000358232" description="NADH-quinone oxidoreductase subunit C">
    <location>
        <begin position="1"/>
        <end position="249"/>
    </location>
</feature>
<protein>
    <recommendedName>
        <fullName evidence="1">NADH-quinone oxidoreductase subunit C</fullName>
        <ecNumber evidence="1">7.1.1.-</ecNumber>
    </recommendedName>
    <alternativeName>
        <fullName evidence="1">NADH dehydrogenase I subunit C</fullName>
    </alternativeName>
    <alternativeName>
        <fullName evidence="1">NDH-1 subunit C</fullName>
    </alternativeName>
</protein>
<dbReference type="EC" id="7.1.1.-" evidence="1"/>
<dbReference type="EMBL" id="CP000941">
    <property type="protein sequence ID" value="ACA11294.1"/>
    <property type="status" value="ALT_INIT"/>
    <property type="molecule type" value="Genomic_DNA"/>
</dbReference>
<dbReference type="RefSeq" id="WP_027700400.1">
    <property type="nucleotide sequence ID" value="NC_010513.1"/>
</dbReference>
<dbReference type="SMR" id="B0U1W7"/>
<dbReference type="KEGG" id="xfm:Xfasm12_0271"/>
<dbReference type="HOGENOM" id="CLU_042628_2_1_6"/>
<dbReference type="GO" id="GO:0005886">
    <property type="term" value="C:plasma membrane"/>
    <property type="evidence" value="ECO:0007669"/>
    <property type="project" value="UniProtKB-SubCell"/>
</dbReference>
<dbReference type="GO" id="GO:0008137">
    <property type="term" value="F:NADH dehydrogenase (ubiquinone) activity"/>
    <property type="evidence" value="ECO:0007669"/>
    <property type="project" value="InterPro"/>
</dbReference>
<dbReference type="GO" id="GO:0050136">
    <property type="term" value="F:NADH:ubiquinone reductase (non-electrogenic) activity"/>
    <property type="evidence" value="ECO:0007669"/>
    <property type="project" value="UniProtKB-UniRule"/>
</dbReference>
<dbReference type="GO" id="GO:0048038">
    <property type="term" value="F:quinone binding"/>
    <property type="evidence" value="ECO:0007669"/>
    <property type="project" value="UniProtKB-KW"/>
</dbReference>
<dbReference type="Gene3D" id="3.30.460.80">
    <property type="entry name" value="NADH:ubiquinone oxidoreductase, 30kDa subunit"/>
    <property type="match status" value="1"/>
</dbReference>
<dbReference type="HAMAP" id="MF_01357">
    <property type="entry name" value="NDH1_NuoC"/>
    <property type="match status" value="1"/>
</dbReference>
<dbReference type="InterPro" id="IPR010218">
    <property type="entry name" value="NADH_DH_suC"/>
</dbReference>
<dbReference type="InterPro" id="IPR037232">
    <property type="entry name" value="NADH_quin_OxRdtase_su_C/D-like"/>
</dbReference>
<dbReference type="InterPro" id="IPR001268">
    <property type="entry name" value="NADH_UbQ_OxRdtase_30kDa_su"/>
</dbReference>
<dbReference type="InterPro" id="IPR020396">
    <property type="entry name" value="NADH_UbQ_OxRdtase_CS"/>
</dbReference>
<dbReference type="NCBIfam" id="NF004730">
    <property type="entry name" value="PRK06074.1-1"/>
    <property type="match status" value="1"/>
</dbReference>
<dbReference type="NCBIfam" id="NF004732">
    <property type="entry name" value="PRK06074.1-4"/>
    <property type="match status" value="1"/>
</dbReference>
<dbReference type="PANTHER" id="PTHR10884:SF14">
    <property type="entry name" value="NADH DEHYDROGENASE [UBIQUINONE] IRON-SULFUR PROTEIN 3, MITOCHONDRIAL"/>
    <property type="match status" value="1"/>
</dbReference>
<dbReference type="PANTHER" id="PTHR10884">
    <property type="entry name" value="NADH DEHYDROGENASE UBIQUINONE IRON-SULFUR PROTEIN 3"/>
    <property type="match status" value="1"/>
</dbReference>
<dbReference type="Pfam" id="PF00329">
    <property type="entry name" value="Complex1_30kDa"/>
    <property type="match status" value="1"/>
</dbReference>
<dbReference type="SUPFAM" id="SSF143243">
    <property type="entry name" value="Nqo5-like"/>
    <property type="match status" value="1"/>
</dbReference>
<dbReference type="PROSITE" id="PS00542">
    <property type="entry name" value="COMPLEX1_30K"/>
    <property type="match status" value="1"/>
</dbReference>
<gene>
    <name evidence="1" type="primary">nuoC</name>
    <name type="ordered locus">Xfasm12_0271</name>
</gene>